<sequence>MKFELDTTDGRARRGRLVFDRGVVETPCFMPVGTYGTVKGMTPEEVEATGAQIILGNTFHLWLRPGQEIMKLHGDLHDFMQWKGPILTDSGGFQVFSLGDIRKITEQGVHFRNPINGDPIFLDPEKSMEIQYDLGSDIVMIFDECTPYPADWDYAKRSMEMSLRWAKRSRERFDSLGNKNALFGIIQGSVYEDLRDISVKGLVDIGFDGYAVGGLAVGEPKADMHRILEHVCPQIPADKPRYLMGVGKPEDLVEGVRRGIDMFDCVMPTRNARNGHLFVTDGVVKIRNAKYKSDTGPLDPECDCYTCRNYSRAYLHHLDRCNEILGARLNTIHNLRYYQRLMAGLRKAIEEGKLESFVTDFYQRQGREVPPLNVD</sequence>
<accession>B7NJ96</accession>
<gene>
    <name evidence="1" type="primary">tgt</name>
    <name type="ordered locus">ECIAI39_0275</name>
</gene>
<feature type="chain" id="PRO_1000198005" description="Queuine tRNA-ribosyltransferase">
    <location>
        <begin position="1"/>
        <end position="375"/>
    </location>
</feature>
<feature type="region of interest" description="RNA binding" evidence="1">
    <location>
        <begin position="245"/>
        <end position="251"/>
    </location>
</feature>
<feature type="region of interest" description="RNA binding; important for wobble base 34 recognition" evidence="1">
    <location>
        <begin position="269"/>
        <end position="273"/>
    </location>
</feature>
<feature type="active site" description="Proton acceptor" evidence="1">
    <location>
        <position position="89"/>
    </location>
</feature>
<feature type="active site" description="Nucleophile" evidence="1">
    <location>
        <position position="264"/>
    </location>
</feature>
<feature type="binding site" evidence="1">
    <location>
        <begin position="89"/>
        <end position="93"/>
    </location>
    <ligand>
        <name>substrate</name>
    </ligand>
</feature>
<feature type="binding site" evidence="1">
    <location>
        <position position="143"/>
    </location>
    <ligand>
        <name>substrate</name>
    </ligand>
</feature>
<feature type="binding site" evidence="1">
    <location>
        <position position="187"/>
    </location>
    <ligand>
        <name>substrate</name>
    </ligand>
</feature>
<feature type="binding site" evidence="1">
    <location>
        <position position="214"/>
    </location>
    <ligand>
        <name>substrate</name>
    </ligand>
</feature>
<feature type="binding site" evidence="1">
    <location>
        <position position="302"/>
    </location>
    <ligand>
        <name>Zn(2+)</name>
        <dbReference type="ChEBI" id="CHEBI:29105"/>
    </ligand>
</feature>
<feature type="binding site" evidence="1">
    <location>
        <position position="304"/>
    </location>
    <ligand>
        <name>Zn(2+)</name>
        <dbReference type="ChEBI" id="CHEBI:29105"/>
    </ligand>
</feature>
<feature type="binding site" evidence="1">
    <location>
        <position position="307"/>
    </location>
    <ligand>
        <name>Zn(2+)</name>
        <dbReference type="ChEBI" id="CHEBI:29105"/>
    </ligand>
</feature>
<feature type="binding site" evidence="1">
    <location>
        <position position="333"/>
    </location>
    <ligand>
        <name>Zn(2+)</name>
        <dbReference type="ChEBI" id="CHEBI:29105"/>
    </ligand>
</feature>
<keyword id="KW-0328">Glycosyltransferase</keyword>
<keyword id="KW-0479">Metal-binding</keyword>
<keyword id="KW-0671">Queuosine biosynthesis</keyword>
<keyword id="KW-0808">Transferase</keyword>
<keyword id="KW-0819">tRNA processing</keyword>
<keyword id="KW-0862">Zinc</keyword>
<dbReference type="EC" id="2.4.2.29" evidence="1"/>
<dbReference type="EMBL" id="CU928164">
    <property type="protein sequence ID" value="CAR16415.1"/>
    <property type="molecule type" value="Genomic_DNA"/>
</dbReference>
<dbReference type="RefSeq" id="WP_000667319.1">
    <property type="nucleotide sequence ID" value="NC_011750.1"/>
</dbReference>
<dbReference type="RefSeq" id="YP_002406318.1">
    <property type="nucleotide sequence ID" value="NC_011750.1"/>
</dbReference>
<dbReference type="SMR" id="B7NJ96"/>
<dbReference type="STRING" id="585057.ECIAI39_0275"/>
<dbReference type="GeneID" id="93777054"/>
<dbReference type="KEGG" id="ect:ECIAI39_0275"/>
<dbReference type="PATRIC" id="fig|585057.6.peg.297"/>
<dbReference type="HOGENOM" id="CLU_022060_0_1_6"/>
<dbReference type="UniPathway" id="UPA00392"/>
<dbReference type="Proteomes" id="UP000000749">
    <property type="component" value="Chromosome"/>
</dbReference>
<dbReference type="GO" id="GO:0005829">
    <property type="term" value="C:cytosol"/>
    <property type="evidence" value="ECO:0007669"/>
    <property type="project" value="TreeGrafter"/>
</dbReference>
<dbReference type="GO" id="GO:0046872">
    <property type="term" value="F:metal ion binding"/>
    <property type="evidence" value="ECO:0007669"/>
    <property type="project" value="UniProtKB-KW"/>
</dbReference>
<dbReference type="GO" id="GO:0008479">
    <property type="term" value="F:tRNA-guanosine(34) queuine transglycosylase activity"/>
    <property type="evidence" value="ECO:0007669"/>
    <property type="project" value="UniProtKB-UniRule"/>
</dbReference>
<dbReference type="GO" id="GO:0008616">
    <property type="term" value="P:queuosine biosynthetic process"/>
    <property type="evidence" value="ECO:0007669"/>
    <property type="project" value="UniProtKB-UniRule"/>
</dbReference>
<dbReference type="GO" id="GO:0002099">
    <property type="term" value="P:tRNA wobble guanine modification"/>
    <property type="evidence" value="ECO:0007669"/>
    <property type="project" value="TreeGrafter"/>
</dbReference>
<dbReference type="GO" id="GO:0101030">
    <property type="term" value="P:tRNA-guanine transglycosylation"/>
    <property type="evidence" value="ECO:0007669"/>
    <property type="project" value="InterPro"/>
</dbReference>
<dbReference type="FunFam" id="3.20.20.105:FF:000001">
    <property type="entry name" value="Queuine tRNA-ribosyltransferase"/>
    <property type="match status" value="1"/>
</dbReference>
<dbReference type="Gene3D" id="3.20.20.105">
    <property type="entry name" value="Queuine tRNA-ribosyltransferase-like"/>
    <property type="match status" value="1"/>
</dbReference>
<dbReference type="HAMAP" id="MF_00168">
    <property type="entry name" value="Q_tRNA_Tgt"/>
    <property type="match status" value="1"/>
</dbReference>
<dbReference type="InterPro" id="IPR050076">
    <property type="entry name" value="ArchSynthase1/Queuine_TRR"/>
</dbReference>
<dbReference type="InterPro" id="IPR004803">
    <property type="entry name" value="TGT"/>
</dbReference>
<dbReference type="InterPro" id="IPR036511">
    <property type="entry name" value="TGT-like_sf"/>
</dbReference>
<dbReference type="InterPro" id="IPR002616">
    <property type="entry name" value="tRNA_ribo_trans-like"/>
</dbReference>
<dbReference type="NCBIfam" id="TIGR00430">
    <property type="entry name" value="Q_tRNA_tgt"/>
    <property type="match status" value="1"/>
</dbReference>
<dbReference type="NCBIfam" id="TIGR00449">
    <property type="entry name" value="tgt_general"/>
    <property type="match status" value="1"/>
</dbReference>
<dbReference type="PANTHER" id="PTHR46499">
    <property type="entry name" value="QUEUINE TRNA-RIBOSYLTRANSFERASE"/>
    <property type="match status" value="1"/>
</dbReference>
<dbReference type="PANTHER" id="PTHR46499:SF1">
    <property type="entry name" value="QUEUINE TRNA-RIBOSYLTRANSFERASE"/>
    <property type="match status" value="1"/>
</dbReference>
<dbReference type="Pfam" id="PF01702">
    <property type="entry name" value="TGT"/>
    <property type="match status" value="1"/>
</dbReference>
<dbReference type="SUPFAM" id="SSF51713">
    <property type="entry name" value="tRNA-guanine transglycosylase"/>
    <property type="match status" value="1"/>
</dbReference>
<name>TGT_ECO7I</name>
<reference key="1">
    <citation type="journal article" date="2009" name="PLoS Genet.">
        <title>Organised genome dynamics in the Escherichia coli species results in highly diverse adaptive paths.</title>
        <authorList>
            <person name="Touchon M."/>
            <person name="Hoede C."/>
            <person name="Tenaillon O."/>
            <person name="Barbe V."/>
            <person name="Baeriswyl S."/>
            <person name="Bidet P."/>
            <person name="Bingen E."/>
            <person name="Bonacorsi S."/>
            <person name="Bouchier C."/>
            <person name="Bouvet O."/>
            <person name="Calteau A."/>
            <person name="Chiapello H."/>
            <person name="Clermont O."/>
            <person name="Cruveiller S."/>
            <person name="Danchin A."/>
            <person name="Diard M."/>
            <person name="Dossat C."/>
            <person name="Karoui M.E."/>
            <person name="Frapy E."/>
            <person name="Garry L."/>
            <person name="Ghigo J.M."/>
            <person name="Gilles A.M."/>
            <person name="Johnson J."/>
            <person name="Le Bouguenec C."/>
            <person name="Lescat M."/>
            <person name="Mangenot S."/>
            <person name="Martinez-Jehanne V."/>
            <person name="Matic I."/>
            <person name="Nassif X."/>
            <person name="Oztas S."/>
            <person name="Petit M.A."/>
            <person name="Pichon C."/>
            <person name="Rouy Z."/>
            <person name="Ruf C.S."/>
            <person name="Schneider D."/>
            <person name="Tourret J."/>
            <person name="Vacherie B."/>
            <person name="Vallenet D."/>
            <person name="Medigue C."/>
            <person name="Rocha E.P.C."/>
            <person name="Denamur E."/>
        </authorList>
    </citation>
    <scope>NUCLEOTIDE SEQUENCE [LARGE SCALE GENOMIC DNA]</scope>
    <source>
        <strain>IAI39 / ExPEC</strain>
    </source>
</reference>
<protein>
    <recommendedName>
        <fullName evidence="1">Queuine tRNA-ribosyltransferase</fullName>
        <ecNumber evidence="1">2.4.2.29</ecNumber>
    </recommendedName>
    <alternativeName>
        <fullName evidence="1">Guanine insertion enzyme</fullName>
    </alternativeName>
    <alternativeName>
        <fullName evidence="1">tRNA-guanine transglycosylase</fullName>
    </alternativeName>
</protein>
<evidence type="ECO:0000255" key="1">
    <source>
        <dbReference type="HAMAP-Rule" id="MF_00168"/>
    </source>
</evidence>
<proteinExistence type="inferred from homology"/>
<organism>
    <name type="scientific">Escherichia coli O7:K1 (strain IAI39 / ExPEC)</name>
    <dbReference type="NCBI Taxonomy" id="585057"/>
    <lineage>
        <taxon>Bacteria</taxon>
        <taxon>Pseudomonadati</taxon>
        <taxon>Pseudomonadota</taxon>
        <taxon>Gammaproteobacteria</taxon>
        <taxon>Enterobacterales</taxon>
        <taxon>Enterobacteriaceae</taxon>
        <taxon>Escherichia</taxon>
    </lineage>
</organism>
<comment type="function">
    <text evidence="1">Catalyzes the base-exchange of a guanine (G) residue with the queuine precursor 7-aminomethyl-7-deazaguanine (PreQ1) at position 34 (anticodon wobble position) in tRNAs with GU(N) anticodons (tRNA-Asp, -Asn, -His and -Tyr). Catalysis occurs through a double-displacement mechanism. The nucleophile active site attacks the C1' of nucleotide 34 to detach the guanine base from the RNA, forming a covalent enzyme-RNA intermediate. The proton acceptor active site deprotonates the incoming PreQ1, allowing a nucleophilic attack on the C1' of the ribose to form the product. After dissociation, two additional enzymatic reactions on the tRNA convert PreQ1 to queuine (Q), resulting in the hypermodified nucleoside queuosine (7-(((4,5-cis-dihydroxy-2-cyclopenten-1-yl)amino)methyl)-7-deazaguanosine).</text>
</comment>
<comment type="catalytic activity">
    <reaction evidence="1">
        <text>7-aminomethyl-7-carbaguanine + guanosine(34) in tRNA = 7-aminomethyl-7-carbaguanosine(34) in tRNA + guanine</text>
        <dbReference type="Rhea" id="RHEA:24104"/>
        <dbReference type="Rhea" id="RHEA-COMP:10341"/>
        <dbReference type="Rhea" id="RHEA-COMP:10342"/>
        <dbReference type="ChEBI" id="CHEBI:16235"/>
        <dbReference type="ChEBI" id="CHEBI:58703"/>
        <dbReference type="ChEBI" id="CHEBI:74269"/>
        <dbReference type="ChEBI" id="CHEBI:82833"/>
        <dbReference type="EC" id="2.4.2.29"/>
    </reaction>
</comment>
<comment type="cofactor">
    <cofactor evidence="1">
        <name>Zn(2+)</name>
        <dbReference type="ChEBI" id="CHEBI:29105"/>
    </cofactor>
    <text evidence="1">Binds 1 zinc ion per subunit.</text>
</comment>
<comment type="pathway">
    <text evidence="1">tRNA modification; tRNA-queuosine biosynthesis.</text>
</comment>
<comment type="subunit">
    <text evidence="1">Homodimer. Within each dimer, one monomer is responsible for RNA recognition and catalysis, while the other monomer binds to the replacement base PreQ1.</text>
</comment>
<comment type="similarity">
    <text evidence="1">Belongs to the queuine tRNA-ribosyltransferase family.</text>
</comment>